<organism>
    <name type="scientific">Sus scrofa</name>
    <name type="common">Pig</name>
    <dbReference type="NCBI Taxonomy" id="9823"/>
    <lineage>
        <taxon>Eukaryota</taxon>
        <taxon>Metazoa</taxon>
        <taxon>Chordata</taxon>
        <taxon>Craniata</taxon>
        <taxon>Vertebrata</taxon>
        <taxon>Euteleostomi</taxon>
        <taxon>Mammalia</taxon>
        <taxon>Eutheria</taxon>
        <taxon>Laurasiatheria</taxon>
        <taxon>Artiodactyla</taxon>
        <taxon>Suina</taxon>
        <taxon>Suidae</taxon>
        <taxon>Sus</taxon>
    </lineage>
</organism>
<accession>Q3ZDQ5</accession>
<accession>Q15G23</accession>
<proteinExistence type="evidence at transcript level"/>
<gene>
    <name type="primary">CAV3</name>
</gene>
<comment type="function">
    <text evidence="2 5">May act as a scaffolding protein within caveolar membranes. Interacts directly with G-protein alpha subunits and can functionally regulate their activity. May also regulate voltage-gated potassium channels. Plays a role in the sarcolemma repair mechanism of both skeletal muscle and cardiomyocytes that permits rapid resealing of membranes disrupted by mechanical stress. Mediates the recruitment of CAVIN2 and CAVIN3 proteins to the caveolae.</text>
</comment>
<comment type="subunit">
    <text evidence="2 3 5">Homooligomer. Interacts with DYSF. Interacts with DLG1 and KCNA5; forms a ternary complex. Interacts with DAG1 (via its C-terminal); the interaction prevents binding of DAG1 with DMD. Interacts with TRIM72. Interacts with MUSK; may regulate MUSK signaling. Interacts with POPDC1. Interacts with CAVIN1, CAVIN2 and CAVIN4.</text>
</comment>
<comment type="subcellular location">
    <subcellularLocation>
        <location evidence="1">Golgi apparatus membrane</location>
        <topology evidence="1">Peripheral membrane protein</topology>
    </subcellularLocation>
    <subcellularLocation>
        <location evidence="4">Cell membrane</location>
        <topology evidence="1">Peripheral membrane protein</topology>
    </subcellularLocation>
    <subcellularLocation>
        <location evidence="2">Membrane</location>
        <location evidence="2">Caveola</location>
        <topology evidence="1">Peripheral membrane protein</topology>
    </subcellularLocation>
    <subcellularLocation>
        <location evidence="2">Cell membrane</location>
        <location evidence="2">Sarcolemma</location>
    </subcellularLocation>
    <text evidence="1">Potential hairpin-like structure in the membrane. Membrane protein of caveolae (By similarity).</text>
</comment>
<comment type="tissue specificity">
    <text evidence="7">Expressed specifically in skeletal muscle and heart.</text>
</comment>
<comment type="PTM">
    <text evidence="1">Sumoylation with SUMO3 by PIAS4 may reduce agonist-induced internalization and desensitization of adrenergic receptor ABRD2.</text>
</comment>
<comment type="similarity">
    <text evidence="8">Belongs to the caveolin family.</text>
</comment>
<reference key="1">
    <citation type="submission" date="2005-03" db="EMBL/GenBank/DDBJ databases">
        <title>Characterization of the porcine caveolin 3 gene and its expression in various tissues and during development.</title>
        <authorList>
            <person name="Jacobsen M."/>
            <person name="Horn P."/>
            <person name="Bendixen C."/>
        </authorList>
    </citation>
    <scope>NUCLEOTIDE SEQUENCE [MRNA]</scope>
</reference>
<reference key="2">
    <citation type="journal article" date="2006" name="Biochem. Biophys. Res. Commun.">
        <title>Molecular characterization and expression analysis of the porcine caveolin-3 gene.</title>
        <authorList>
            <person name="Zhu Z."/>
            <person name="Li Y."/>
            <person name="Mo D."/>
            <person name="Li K."/>
            <person name="Zhao S."/>
        </authorList>
    </citation>
    <scope>NUCLEOTIDE SEQUENCE [GENOMIC DNA] OF 1-22</scope>
    <scope>TISSUE SPECIFICITY</scope>
    <source>
        <tissue>Skeletal muscle</tissue>
    </source>
</reference>
<keyword id="KW-1003">Cell membrane</keyword>
<keyword id="KW-0333">Golgi apparatus</keyword>
<keyword id="KW-1017">Isopeptide bond</keyword>
<keyword id="KW-0472">Membrane</keyword>
<keyword id="KW-1185">Reference proteome</keyword>
<keyword id="KW-0832">Ubl conjugation</keyword>
<evidence type="ECO:0000250" key="1"/>
<evidence type="ECO:0000250" key="2">
    <source>
        <dbReference type="UniProtKB" id="P51637"/>
    </source>
</evidence>
<evidence type="ECO:0000250" key="3">
    <source>
        <dbReference type="UniProtKB" id="P51638"/>
    </source>
</evidence>
<evidence type="ECO:0000250" key="4">
    <source>
        <dbReference type="UniProtKB" id="P56538"/>
    </source>
</evidence>
<evidence type="ECO:0000250" key="5">
    <source>
        <dbReference type="UniProtKB" id="P56539"/>
    </source>
</evidence>
<evidence type="ECO:0000255" key="6"/>
<evidence type="ECO:0000269" key="7">
    <source>
    </source>
</evidence>
<evidence type="ECO:0000305" key="8"/>
<name>CAV3_PIG</name>
<dbReference type="EMBL" id="AY953426">
    <property type="protein sequence ID" value="AAY33919.1"/>
    <property type="molecule type" value="mRNA"/>
</dbReference>
<dbReference type="EMBL" id="AY953425">
    <property type="protein sequence ID" value="AAY33918.1"/>
    <property type="molecule type" value="Genomic_DNA"/>
</dbReference>
<dbReference type="EMBL" id="AY953424">
    <property type="protein sequence ID" value="AAY33918.1"/>
    <property type="status" value="JOINED"/>
    <property type="molecule type" value="Genomic_DNA"/>
</dbReference>
<dbReference type="EMBL" id="DQ415642">
    <property type="protein sequence ID" value="ABD92696.1"/>
    <property type="molecule type" value="Genomic_DNA"/>
</dbReference>
<dbReference type="RefSeq" id="NP_001032226.1">
    <property type="nucleotide sequence ID" value="NM_001037149.1"/>
</dbReference>
<dbReference type="SMR" id="Q3ZDQ5"/>
<dbReference type="FunCoup" id="Q3ZDQ5">
    <property type="interactions" value="1054"/>
</dbReference>
<dbReference type="STRING" id="9823.ENSSSCP00000032766"/>
<dbReference type="PeptideAtlas" id="Q3ZDQ5"/>
<dbReference type="Ensembl" id="ENSSSCT00000102209.1">
    <property type="protein sequence ID" value="ENSSSCP00000077820.1"/>
    <property type="gene ID" value="ENSSSCG00000056902.1"/>
</dbReference>
<dbReference type="Ensembl" id="ENSSSCT00015051569.1">
    <property type="protein sequence ID" value="ENSSSCP00015020572.1"/>
    <property type="gene ID" value="ENSSSCG00015038599.1"/>
</dbReference>
<dbReference type="Ensembl" id="ENSSSCT00030057691.1">
    <property type="protein sequence ID" value="ENSSSCP00030026234.1"/>
    <property type="gene ID" value="ENSSSCG00030041511.1"/>
</dbReference>
<dbReference type="Ensembl" id="ENSSSCT00035030273.1">
    <property type="protein sequence ID" value="ENSSSCP00035011785.1"/>
    <property type="gene ID" value="ENSSSCG00035023113.1"/>
</dbReference>
<dbReference type="Ensembl" id="ENSSSCT00040046377.1">
    <property type="protein sequence ID" value="ENSSSCP00040019451.1"/>
    <property type="gene ID" value="ENSSSCG00040034459.1"/>
</dbReference>
<dbReference type="Ensembl" id="ENSSSCT00045029087.1">
    <property type="protein sequence ID" value="ENSSSCP00045020142.1"/>
    <property type="gene ID" value="ENSSSCG00045017085.1"/>
</dbReference>
<dbReference type="Ensembl" id="ENSSSCT00050031641.1">
    <property type="protein sequence ID" value="ENSSSCP00050013224.1"/>
    <property type="gene ID" value="ENSSSCG00050023439.1"/>
</dbReference>
<dbReference type="Ensembl" id="ENSSSCT00055060621.1">
    <property type="protein sequence ID" value="ENSSSCP00055048570.1"/>
    <property type="gene ID" value="ENSSSCG00055030458.1"/>
</dbReference>
<dbReference type="Ensembl" id="ENSSSCT00060066896.1">
    <property type="protein sequence ID" value="ENSSSCP00060028642.1"/>
    <property type="gene ID" value="ENSSSCG00060049259.1"/>
</dbReference>
<dbReference type="Ensembl" id="ENSSSCT00065059351.1">
    <property type="protein sequence ID" value="ENSSSCP00065025742.1"/>
    <property type="gene ID" value="ENSSSCG00065043396.1"/>
</dbReference>
<dbReference type="Ensembl" id="ENSSSCT00070041718.1">
    <property type="protein sequence ID" value="ENSSSCP00070035029.1"/>
    <property type="gene ID" value="ENSSSCG00070021000.1"/>
</dbReference>
<dbReference type="Ensembl" id="ENSSSCT00090042492">
    <property type="protein sequence ID" value="ENSSSCP00090026449"/>
    <property type="gene ID" value="ENSSSCG00090024023"/>
</dbReference>
<dbReference type="Ensembl" id="ENSSSCT00105070072">
    <property type="protein sequence ID" value="ENSSSCP00105049610"/>
    <property type="gene ID" value="ENSSSCG00105036765"/>
</dbReference>
<dbReference type="Ensembl" id="ENSSSCT00110058437">
    <property type="protein sequence ID" value="ENSSSCP00110040726"/>
    <property type="gene ID" value="ENSSSCG00110030592"/>
</dbReference>
<dbReference type="Ensembl" id="ENSSSCT00115026649">
    <property type="protein sequence ID" value="ENSSSCP00115025257"/>
    <property type="gene ID" value="ENSSSCG00115015312"/>
</dbReference>
<dbReference type="Ensembl" id="ENSSSCT00130034802">
    <property type="protein sequence ID" value="ENSSSCP00130024159"/>
    <property type="gene ID" value="ENSSSCG00130012459"/>
</dbReference>
<dbReference type="GeneID" id="641358"/>
<dbReference type="KEGG" id="ssc:641358"/>
<dbReference type="CTD" id="859"/>
<dbReference type="GeneTree" id="ENSGT00950000183006"/>
<dbReference type="InParanoid" id="Q3ZDQ5"/>
<dbReference type="OMA" id="MCSSIKV"/>
<dbReference type="OrthoDB" id="5917823at2759"/>
<dbReference type="Proteomes" id="UP000008227">
    <property type="component" value="Chromosome 13"/>
</dbReference>
<dbReference type="Proteomes" id="UP000314985">
    <property type="component" value="Chromosome 13"/>
</dbReference>
<dbReference type="Proteomes" id="UP000694570">
    <property type="component" value="Unplaced"/>
</dbReference>
<dbReference type="Proteomes" id="UP000694571">
    <property type="component" value="Unplaced"/>
</dbReference>
<dbReference type="Proteomes" id="UP000694720">
    <property type="component" value="Unplaced"/>
</dbReference>
<dbReference type="Proteomes" id="UP000694722">
    <property type="component" value="Unplaced"/>
</dbReference>
<dbReference type="Proteomes" id="UP000694723">
    <property type="component" value="Unplaced"/>
</dbReference>
<dbReference type="Proteomes" id="UP000694724">
    <property type="component" value="Unplaced"/>
</dbReference>
<dbReference type="Proteomes" id="UP000694725">
    <property type="component" value="Unplaced"/>
</dbReference>
<dbReference type="Proteomes" id="UP000694726">
    <property type="component" value="Unplaced"/>
</dbReference>
<dbReference type="Proteomes" id="UP000694727">
    <property type="component" value="Unplaced"/>
</dbReference>
<dbReference type="Proteomes" id="UP000694728">
    <property type="component" value="Unplaced"/>
</dbReference>
<dbReference type="Bgee" id="ENSSSCG00000040643">
    <property type="expression patterns" value="Expressed in longissimus lumborum muscle and 9 other cell types or tissues"/>
</dbReference>
<dbReference type="GO" id="GO:0005901">
    <property type="term" value="C:caveola"/>
    <property type="evidence" value="ECO:0000250"/>
    <property type="project" value="UniProtKB"/>
</dbReference>
<dbReference type="GO" id="GO:0016010">
    <property type="term" value="C:dystrophin-associated glycoprotein complex"/>
    <property type="evidence" value="ECO:0007669"/>
    <property type="project" value="Ensembl"/>
</dbReference>
<dbReference type="GO" id="GO:0005783">
    <property type="term" value="C:endoplasmic reticulum"/>
    <property type="evidence" value="ECO:0007669"/>
    <property type="project" value="Ensembl"/>
</dbReference>
<dbReference type="GO" id="GO:0000139">
    <property type="term" value="C:Golgi membrane"/>
    <property type="evidence" value="ECO:0007669"/>
    <property type="project" value="UniProtKB-SubCell"/>
</dbReference>
<dbReference type="GO" id="GO:0042383">
    <property type="term" value="C:sarcolemma"/>
    <property type="evidence" value="ECO:0000250"/>
    <property type="project" value="UniProtKB"/>
</dbReference>
<dbReference type="GO" id="GO:0030315">
    <property type="term" value="C:T-tubule"/>
    <property type="evidence" value="ECO:0007669"/>
    <property type="project" value="Ensembl"/>
</dbReference>
<dbReference type="GO" id="GO:0043014">
    <property type="term" value="F:alpha-tubulin binding"/>
    <property type="evidence" value="ECO:0007669"/>
    <property type="project" value="Ensembl"/>
</dbReference>
<dbReference type="GO" id="GO:0005246">
    <property type="term" value="F:calcium channel regulator activity"/>
    <property type="evidence" value="ECO:0007669"/>
    <property type="project" value="Ensembl"/>
</dbReference>
<dbReference type="GO" id="GO:0071253">
    <property type="term" value="F:connexin binding"/>
    <property type="evidence" value="ECO:0007669"/>
    <property type="project" value="Ensembl"/>
</dbReference>
<dbReference type="GO" id="GO:0060090">
    <property type="term" value="F:molecular adaptor activity"/>
    <property type="evidence" value="ECO:0000318"/>
    <property type="project" value="GO_Central"/>
</dbReference>
<dbReference type="GO" id="GO:0044877">
    <property type="term" value="F:protein-containing complex binding"/>
    <property type="evidence" value="ECO:0007669"/>
    <property type="project" value="Ensembl"/>
</dbReference>
<dbReference type="GO" id="GO:0017080">
    <property type="term" value="F:sodium channel regulator activity"/>
    <property type="evidence" value="ECO:0007669"/>
    <property type="project" value="Ensembl"/>
</dbReference>
<dbReference type="GO" id="GO:0044325">
    <property type="term" value="F:transmembrane transporter binding"/>
    <property type="evidence" value="ECO:0000318"/>
    <property type="project" value="GO_Central"/>
</dbReference>
<dbReference type="GO" id="GO:0007015">
    <property type="term" value="P:actin filament organization"/>
    <property type="evidence" value="ECO:0007669"/>
    <property type="project" value="Ensembl"/>
</dbReference>
<dbReference type="GO" id="GO:0006816">
    <property type="term" value="P:calcium ion transport"/>
    <property type="evidence" value="ECO:0007669"/>
    <property type="project" value="Ensembl"/>
</dbReference>
<dbReference type="GO" id="GO:0055013">
    <property type="term" value="P:cardiac muscle cell development"/>
    <property type="evidence" value="ECO:0007669"/>
    <property type="project" value="Ensembl"/>
</dbReference>
<dbReference type="GO" id="GO:0003300">
    <property type="term" value="P:cardiac muscle hypertrophy"/>
    <property type="evidence" value="ECO:0007669"/>
    <property type="project" value="Ensembl"/>
</dbReference>
<dbReference type="GO" id="GO:0070836">
    <property type="term" value="P:caveola assembly"/>
    <property type="evidence" value="ECO:0000318"/>
    <property type="project" value="GO_Central"/>
</dbReference>
<dbReference type="GO" id="GO:0030154">
    <property type="term" value="P:cell differentiation"/>
    <property type="evidence" value="ECO:0000318"/>
    <property type="project" value="GO_Central"/>
</dbReference>
<dbReference type="GO" id="GO:0042632">
    <property type="term" value="P:cholesterol homeostasis"/>
    <property type="evidence" value="ECO:0007669"/>
    <property type="project" value="Ensembl"/>
</dbReference>
<dbReference type="GO" id="GO:0031122">
    <property type="term" value="P:cytoplasmic microtubule organization"/>
    <property type="evidence" value="ECO:0007669"/>
    <property type="project" value="Ensembl"/>
</dbReference>
<dbReference type="GO" id="GO:0035995">
    <property type="term" value="P:detection of muscle stretch"/>
    <property type="evidence" value="ECO:0007669"/>
    <property type="project" value="Ensembl"/>
</dbReference>
<dbReference type="GO" id="GO:0051649">
    <property type="term" value="P:establishment of localization in cell"/>
    <property type="evidence" value="ECO:0007669"/>
    <property type="project" value="Ensembl"/>
</dbReference>
<dbReference type="GO" id="GO:0042593">
    <property type="term" value="P:glucose homeostasis"/>
    <property type="evidence" value="ECO:0007669"/>
    <property type="project" value="Ensembl"/>
</dbReference>
<dbReference type="GO" id="GO:0060347">
    <property type="term" value="P:heart trabecula formation"/>
    <property type="evidence" value="ECO:0007669"/>
    <property type="project" value="Ensembl"/>
</dbReference>
<dbReference type="GO" id="GO:0000165">
    <property type="term" value="P:MAPK cascade"/>
    <property type="evidence" value="ECO:0007669"/>
    <property type="project" value="Ensembl"/>
</dbReference>
<dbReference type="GO" id="GO:0007520">
    <property type="term" value="P:myoblast fusion"/>
    <property type="evidence" value="ECO:0007669"/>
    <property type="project" value="Ensembl"/>
</dbReference>
<dbReference type="GO" id="GO:0051926">
    <property type="term" value="P:negative regulation of calcium ion transport"/>
    <property type="evidence" value="ECO:0007669"/>
    <property type="project" value="Ensembl"/>
</dbReference>
<dbReference type="GO" id="GO:0010614">
    <property type="term" value="P:negative regulation of cardiac muscle hypertrophy"/>
    <property type="evidence" value="ECO:0007669"/>
    <property type="project" value="Ensembl"/>
</dbReference>
<dbReference type="GO" id="GO:0045792">
    <property type="term" value="P:negative regulation of cell size"/>
    <property type="evidence" value="ECO:0007669"/>
    <property type="project" value="Ensembl"/>
</dbReference>
<dbReference type="GO" id="GO:0043409">
    <property type="term" value="P:negative regulation of MAPK cascade"/>
    <property type="evidence" value="ECO:0007669"/>
    <property type="project" value="Ensembl"/>
</dbReference>
<dbReference type="GO" id="GO:1900826">
    <property type="term" value="P:negative regulation of membrane depolarization during cardiac muscle cell action potential"/>
    <property type="evidence" value="ECO:0007669"/>
    <property type="project" value="Ensembl"/>
</dbReference>
<dbReference type="GO" id="GO:0060299">
    <property type="term" value="P:negative regulation of sarcomere organization"/>
    <property type="evidence" value="ECO:0007669"/>
    <property type="project" value="Ensembl"/>
</dbReference>
<dbReference type="GO" id="GO:0051647">
    <property type="term" value="P:nucleus localization"/>
    <property type="evidence" value="ECO:0007669"/>
    <property type="project" value="Ensembl"/>
</dbReference>
<dbReference type="GO" id="GO:0001778">
    <property type="term" value="P:plasma membrane repair"/>
    <property type="evidence" value="ECO:0007669"/>
    <property type="project" value="Ensembl"/>
</dbReference>
<dbReference type="GO" id="GO:0010831">
    <property type="term" value="P:positive regulation of myotube differentiation"/>
    <property type="evidence" value="ECO:0007669"/>
    <property type="project" value="Ensembl"/>
</dbReference>
<dbReference type="GO" id="GO:0072659">
    <property type="term" value="P:protein localization to plasma membrane"/>
    <property type="evidence" value="ECO:0007669"/>
    <property type="project" value="Ensembl"/>
</dbReference>
<dbReference type="GO" id="GO:0060762">
    <property type="term" value="P:regulation of branching involved in mammary gland duct morphogenesis"/>
    <property type="evidence" value="ECO:0007669"/>
    <property type="project" value="Ensembl"/>
</dbReference>
<dbReference type="GO" id="GO:0090279">
    <property type="term" value="P:regulation of calcium ion import"/>
    <property type="evidence" value="ECO:0007669"/>
    <property type="project" value="Ensembl"/>
</dbReference>
<dbReference type="GO" id="GO:0098909">
    <property type="term" value="P:regulation of cardiac muscle cell action potential involved in regulation of contraction"/>
    <property type="evidence" value="ECO:0007669"/>
    <property type="project" value="Ensembl"/>
</dbReference>
<dbReference type="GO" id="GO:0051480">
    <property type="term" value="P:regulation of cytosolic calcium ion concentration"/>
    <property type="evidence" value="ECO:0000318"/>
    <property type="project" value="GO_Central"/>
</dbReference>
<dbReference type="GO" id="GO:0002027">
    <property type="term" value="P:regulation of heart rate"/>
    <property type="evidence" value="ECO:0007669"/>
    <property type="project" value="Ensembl"/>
</dbReference>
<dbReference type="GO" id="GO:0042391">
    <property type="term" value="P:regulation of membrane potential"/>
    <property type="evidence" value="ECO:0000318"/>
    <property type="project" value="GO_Central"/>
</dbReference>
<dbReference type="GO" id="GO:1900744">
    <property type="term" value="P:regulation of p38MAPK cascade"/>
    <property type="evidence" value="ECO:0007669"/>
    <property type="project" value="Ensembl"/>
</dbReference>
<dbReference type="GO" id="GO:0051896">
    <property type="term" value="P:regulation of phosphatidylinositol 3-kinase/protein kinase B signal transduction"/>
    <property type="evidence" value="ECO:0007669"/>
    <property type="project" value="Ensembl"/>
</dbReference>
<dbReference type="GO" id="GO:0038009">
    <property type="term" value="P:regulation of signal transduction by receptor internalization"/>
    <property type="evidence" value="ECO:0007669"/>
    <property type="project" value="Ensembl"/>
</dbReference>
<dbReference type="GO" id="GO:0014819">
    <property type="term" value="P:regulation of skeletal muscle contraction"/>
    <property type="evidence" value="ECO:0007669"/>
    <property type="project" value="Ensembl"/>
</dbReference>
<dbReference type="GO" id="GO:1902305">
    <property type="term" value="P:regulation of sodium ion transmembrane transport"/>
    <property type="evidence" value="ECO:0007669"/>
    <property type="project" value="Ensembl"/>
</dbReference>
<dbReference type="GO" id="GO:0017015">
    <property type="term" value="P:regulation of transforming growth factor beta receptor signaling pathway"/>
    <property type="evidence" value="ECO:0007669"/>
    <property type="project" value="Ensembl"/>
</dbReference>
<dbReference type="GO" id="GO:0060373">
    <property type="term" value="P:regulation of ventricular cardiac muscle cell membrane depolarization"/>
    <property type="evidence" value="ECO:0007669"/>
    <property type="project" value="Ensembl"/>
</dbReference>
<dbReference type="GO" id="GO:0060307">
    <property type="term" value="P:regulation of ventricular cardiac muscle cell membrane repolarization"/>
    <property type="evidence" value="ECO:0007669"/>
    <property type="project" value="Ensembl"/>
</dbReference>
<dbReference type="GO" id="GO:0006641">
    <property type="term" value="P:triglyceride metabolic process"/>
    <property type="evidence" value="ECO:0007669"/>
    <property type="project" value="Ensembl"/>
</dbReference>
<dbReference type="InterPro" id="IPR001612">
    <property type="entry name" value="Caveolin"/>
</dbReference>
<dbReference type="InterPro" id="IPR018361">
    <property type="entry name" value="Caveolin_CS"/>
</dbReference>
<dbReference type="PANTHER" id="PTHR10844">
    <property type="entry name" value="CAVEOLIN"/>
    <property type="match status" value="1"/>
</dbReference>
<dbReference type="PANTHER" id="PTHR10844:SF16">
    <property type="entry name" value="CAVEOLIN-3"/>
    <property type="match status" value="1"/>
</dbReference>
<dbReference type="Pfam" id="PF01146">
    <property type="entry name" value="Caveolin"/>
    <property type="match status" value="1"/>
</dbReference>
<dbReference type="PROSITE" id="PS01210">
    <property type="entry name" value="CAVEOLIN"/>
    <property type="match status" value="1"/>
</dbReference>
<protein>
    <recommendedName>
        <fullName>Caveolin-3</fullName>
    </recommendedName>
</protein>
<feature type="chain" id="PRO_0000226343" description="Caveolin-3">
    <location>
        <begin position="1"/>
        <end position="151"/>
    </location>
</feature>
<feature type="topological domain" description="Cytoplasmic" evidence="6">
    <location>
        <begin position="1"/>
        <end position="83"/>
    </location>
</feature>
<feature type="intramembrane region" description="Helical" evidence="6">
    <location>
        <begin position="84"/>
        <end position="104"/>
    </location>
</feature>
<feature type="topological domain" description="Cytoplasmic" evidence="6">
    <location>
        <begin position="105"/>
        <end position="151"/>
    </location>
</feature>
<feature type="region of interest" description="Required for interaction with DAG1" evidence="1">
    <location>
        <begin position="64"/>
        <end position="114"/>
    </location>
</feature>
<feature type="cross-link" description="Glycyl lysine isopeptide (Lys-Gly) (interchain with G-Cter in SUMO3)" evidence="1">
    <location>
        <position position="38"/>
    </location>
</feature>
<sequence>MMAEERTDLEAQIVKDIHFKEIDLVNRDPKNINEDIVKVDFEDVIAEPVGTYSFDGVWKVSYTTFTVSKYWCYRLLSTLLGVPLALLWGFLFACISFCHIWAVVPCIKSYLIEIQCISHIYSLCIRTFCNPVFAALGQVCSNIKVMLRKEV</sequence>